<name>DUT_XANAC</name>
<organism>
    <name type="scientific">Xanthomonas axonopodis pv. citri (strain 306)</name>
    <dbReference type="NCBI Taxonomy" id="190486"/>
    <lineage>
        <taxon>Bacteria</taxon>
        <taxon>Pseudomonadati</taxon>
        <taxon>Pseudomonadota</taxon>
        <taxon>Gammaproteobacteria</taxon>
        <taxon>Lysobacterales</taxon>
        <taxon>Lysobacteraceae</taxon>
        <taxon>Xanthomonas</taxon>
    </lineage>
</organism>
<comment type="function">
    <text evidence="1">This enzyme is involved in nucleotide metabolism: it produces dUMP, the immediate precursor of thymidine nucleotides and it decreases the intracellular concentration of dUTP so that uracil cannot be incorporated into DNA.</text>
</comment>
<comment type="catalytic activity">
    <reaction evidence="1">
        <text>dUTP + H2O = dUMP + diphosphate + H(+)</text>
        <dbReference type="Rhea" id="RHEA:10248"/>
        <dbReference type="ChEBI" id="CHEBI:15377"/>
        <dbReference type="ChEBI" id="CHEBI:15378"/>
        <dbReference type="ChEBI" id="CHEBI:33019"/>
        <dbReference type="ChEBI" id="CHEBI:61555"/>
        <dbReference type="ChEBI" id="CHEBI:246422"/>
        <dbReference type="EC" id="3.6.1.23"/>
    </reaction>
</comment>
<comment type="cofactor">
    <cofactor evidence="1">
        <name>Mg(2+)</name>
        <dbReference type="ChEBI" id="CHEBI:18420"/>
    </cofactor>
</comment>
<comment type="pathway">
    <text evidence="1">Pyrimidine metabolism; dUMP biosynthesis; dUMP from dCTP (dUTP route): step 2/2.</text>
</comment>
<comment type="similarity">
    <text evidence="1">Belongs to the dUTPase family.</text>
</comment>
<sequence length="155" mass="16354">MSPPTQSLQVKLLDPRFGDLWPLPAYATESSAGMDLRAALEAPMTLQPGDAALIPSGIAIHLADPQLCAVILPRSGLGHRHGIVLGNGTGLIDADYQGPLLISTWNRGREAFTIEPGDRIAQLVILPIVRMGLQVVDTFVDSARGAGGFGHTGVR</sequence>
<accession>Q8PFR5</accession>
<evidence type="ECO:0000255" key="1">
    <source>
        <dbReference type="HAMAP-Rule" id="MF_00116"/>
    </source>
</evidence>
<feature type="chain" id="PRO_0000182919" description="Deoxyuridine 5'-triphosphate nucleotidohydrolase">
    <location>
        <begin position="1"/>
        <end position="155"/>
    </location>
</feature>
<feature type="binding site" evidence="1">
    <location>
        <begin position="74"/>
        <end position="76"/>
    </location>
    <ligand>
        <name>substrate</name>
    </ligand>
</feature>
<feature type="binding site" evidence="1">
    <location>
        <position position="87"/>
    </location>
    <ligand>
        <name>substrate</name>
    </ligand>
</feature>
<feature type="binding site" evidence="1">
    <location>
        <begin position="91"/>
        <end position="93"/>
    </location>
    <ligand>
        <name>substrate</name>
    </ligand>
</feature>
<keyword id="KW-0378">Hydrolase</keyword>
<keyword id="KW-0460">Magnesium</keyword>
<keyword id="KW-0479">Metal-binding</keyword>
<keyword id="KW-0546">Nucleotide metabolism</keyword>
<protein>
    <recommendedName>
        <fullName evidence="1">Deoxyuridine 5'-triphosphate nucleotidohydrolase</fullName>
        <shortName evidence="1">dUTPase</shortName>
        <ecNumber evidence="1">3.6.1.23</ecNumber>
    </recommendedName>
    <alternativeName>
        <fullName evidence="1">dUTP pyrophosphatase</fullName>
    </alternativeName>
</protein>
<reference key="1">
    <citation type="journal article" date="2002" name="Nature">
        <title>Comparison of the genomes of two Xanthomonas pathogens with differing host specificities.</title>
        <authorList>
            <person name="da Silva A.C.R."/>
            <person name="Ferro J.A."/>
            <person name="Reinach F.C."/>
            <person name="Farah C.S."/>
            <person name="Furlan L.R."/>
            <person name="Quaggio R.B."/>
            <person name="Monteiro-Vitorello C.B."/>
            <person name="Van Sluys M.A."/>
            <person name="Almeida N.F. Jr."/>
            <person name="Alves L.M.C."/>
            <person name="do Amaral A.M."/>
            <person name="Bertolini M.C."/>
            <person name="Camargo L.E.A."/>
            <person name="Camarotte G."/>
            <person name="Cannavan F."/>
            <person name="Cardozo J."/>
            <person name="Chambergo F."/>
            <person name="Ciapina L.P."/>
            <person name="Cicarelli R.M.B."/>
            <person name="Coutinho L.L."/>
            <person name="Cursino-Santos J.R."/>
            <person name="El-Dorry H."/>
            <person name="Faria J.B."/>
            <person name="Ferreira A.J.S."/>
            <person name="Ferreira R.C.C."/>
            <person name="Ferro M.I.T."/>
            <person name="Formighieri E.F."/>
            <person name="Franco M.C."/>
            <person name="Greggio C.C."/>
            <person name="Gruber A."/>
            <person name="Katsuyama A.M."/>
            <person name="Kishi L.T."/>
            <person name="Leite R.P."/>
            <person name="Lemos E.G.M."/>
            <person name="Lemos M.V.F."/>
            <person name="Locali E.C."/>
            <person name="Machado M.A."/>
            <person name="Madeira A.M.B.N."/>
            <person name="Martinez-Rossi N.M."/>
            <person name="Martins E.C."/>
            <person name="Meidanis J."/>
            <person name="Menck C.F.M."/>
            <person name="Miyaki C.Y."/>
            <person name="Moon D.H."/>
            <person name="Moreira L.M."/>
            <person name="Novo M.T.M."/>
            <person name="Okura V.K."/>
            <person name="Oliveira M.C."/>
            <person name="Oliveira V.R."/>
            <person name="Pereira H.A."/>
            <person name="Rossi A."/>
            <person name="Sena J.A.D."/>
            <person name="Silva C."/>
            <person name="de Souza R.F."/>
            <person name="Spinola L.A.F."/>
            <person name="Takita M.A."/>
            <person name="Tamura R.E."/>
            <person name="Teixeira E.C."/>
            <person name="Tezza R.I.D."/>
            <person name="Trindade dos Santos M."/>
            <person name="Truffi D."/>
            <person name="Tsai S.M."/>
            <person name="White F.F."/>
            <person name="Setubal J.C."/>
            <person name="Kitajima J.P."/>
        </authorList>
    </citation>
    <scope>NUCLEOTIDE SEQUENCE [LARGE SCALE GENOMIC DNA]</scope>
    <source>
        <strain>306</strain>
    </source>
</reference>
<proteinExistence type="inferred from homology"/>
<dbReference type="EC" id="3.6.1.23" evidence="1"/>
<dbReference type="EMBL" id="AE008923">
    <property type="protein sequence ID" value="AAM38750.1"/>
    <property type="molecule type" value="Genomic_DNA"/>
</dbReference>
<dbReference type="RefSeq" id="WP_007964142.1">
    <property type="nucleotide sequence ID" value="NC_003919.1"/>
</dbReference>
<dbReference type="SMR" id="Q8PFR5"/>
<dbReference type="GeneID" id="97512090"/>
<dbReference type="KEGG" id="xac:XAC3913"/>
<dbReference type="eggNOG" id="COG0756">
    <property type="taxonomic scope" value="Bacteria"/>
</dbReference>
<dbReference type="HOGENOM" id="CLU_068508_1_1_6"/>
<dbReference type="UniPathway" id="UPA00610">
    <property type="reaction ID" value="UER00666"/>
</dbReference>
<dbReference type="Proteomes" id="UP000000576">
    <property type="component" value="Chromosome"/>
</dbReference>
<dbReference type="GO" id="GO:0004170">
    <property type="term" value="F:dUTP diphosphatase activity"/>
    <property type="evidence" value="ECO:0007669"/>
    <property type="project" value="UniProtKB-UniRule"/>
</dbReference>
<dbReference type="GO" id="GO:0000287">
    <property type="term" value="F:magnesium ion binding"/>
    <property type="evidence" value="ECO:0007669"/>
    <property type="project" value="UniProtKB-UniRule"/>
</dbReference>
<dbReference type="GO" id="GO:0006226">
    <property type="term" value="P:dUMP biosynthetic process"/>
    <property type="evidence" value="ECO:0007669"/>
    <property type="project" value="UniProtKB-UniRule"/>
</dbReference>
<dbReference type="GO" id="GO:0046081">
    <property type="term" value="P:dUTP catabolic process"/>
    <property type="evidence" value="ECO:0007669"/>
    <property type="project" value="InterPro"/>
</dbReference>
<dbReference type="CDD" id="cd07557">
    <property type="entry name" value="trimeric_dUTPase"/>
    <property type="match status" value="1"/>
</dbReference>
<dbReference type="FunFam" id="2.70.40.10:FF:000002">
    <property type="entry name" value="dUTP diphosphatase"/>
    <property type="match status" value="1"/>
</dbReference>
<dbReference type="Gene3D" id="2.70.40.10">
    <property type="match status" value="1"/>
</dbReference>
<dbReference type="HAMAP" id="MF_00116">
    <property type="entry name" value="dUTPase_bact"/>
    <property type="match status" value="1"/>
</dbReference>
<dbReference type="InterPro" id="IPR008181">
    <property type="entry name" value="dUTPase"/>
</dbReference>
<dbReference type="InterPro" id="IPR029054">
    <property type="entry name" value="dUTPase-like"/>
</dbReference>
<dbReference type="InterPro" id="IPR036157">
    <property type="entry name" value="dUTPase-like_sf"/>
</dbReference>
<dbReference type="InterPro" id="IPR033704">
    <property type="entry name" value="dUTPase_trimeric"/>
</dbReference>
<dbReference type="NCBIfam" id="TIGR00576">
    <property type="entry name" value="dut"/>
    <property type="match status" value="1"/>
</dbReference>
<dbReference type="NCBIfam" id="NF001862">
    <property type="entry name" value="PRK00601.1"/>
    <property type="match status" value="1"/>
</dbReference>
<dbReference type="PANTHER" id="PTHR11241">
    <property type="entry name" value="DEOXYURIDINE 5'-TRIPHOSPHATE NUCLEOTIDOHYDROLASE"/>
    <property type="match status" value="1"/>
</dbReference>
<dbReference type="PANTHER" id="PTHR11241:SF0">
    <property type="entry name" value="DEOXYURIDINE 5'-TRIPHOSPHATE NUCLEOTIDOHYDROLASE"/>
    <property type="match status" value="1"/>
</dbReference>
<dbReference type="Pfam" id="PF00692">
    <property type="entry name" value="dUTPase"/>
    <property type="match status" value="1"/>
</dbReference>
<dbReference type="SUPFAM" id="SSF51283">
    <property type="entry name" value="dUTPase-like"/>
    <property type="match status" value="1"/>
</dbReference>
<gene>
    <name evidence="1" type="primary">dut</name>
    <name type="ordered locus">XAC3913</name>
</gene>